<comment type="cofactor">
    <cofactor evidence="1">
        <name>Fe cation</name>
        <dbReference type="ChEBI" id="CHEBI:24875"/>
    </cofactor>
</comment>
<comment type="similarity">
    <text evidence="3">Belongs to the iron/ascorbate-dependent oxidoreductase family.</text>
</comment>
<comment type="sequence caution" evidence="3">
    <conflict type="erroneous gene model prediction">
        <sequence resource="EMBL-CDS" id="AAF24827"/>
    </conflict>
    <text>The predicted gene At1g06630 has been split into 4 genes: At1g06620, At1g06630, At1g06640 and At1g06650.</text>
</comment>
<accession>Q84MB3</accession>
<accession>Q9SHK4</accession>
<keyword id="KW-0408">Iron</keyword>
<keyword id="KW-0479">Metal-binding</keyword>
<keyword id="KW-0560">Oxidoreductase</keyword>
<keyword id="KW-1185">Reference proteome</keyword>
<protein>
    <recommendedName>
        <fullName>1-aminocyclopropane-1-carboxylate oxidase homolog 1</fullName>
    </recommendedName>
</protein>
<dbReference type="EMBL" id="AC007592">
    <property type="protein sequence ID" value="AAF24827.1"/>
    <property type="status" value="ALT_SEQ"/>
    <property type="molecule type" value="Genomic_DNA"/>
</dbReference>
<dbReference type="EMBL" id="CP002684">
    <property type="protein sequence ID" value="AEE28010.1"/>
    <property type="molecule type" value="Genomic_DNA"/>
</dbReference>
<dbReference type="EMBL" id="BT006430">
    <property type="protein sequence ID" value="AAP21238.1"/>
    <property type="molecule type" value="mRNA"/>
</dbReference>
<dbReference type="EMBL" id="AK227676">
    <property type="protein sequence ID" value="BAE99663.1"/>
    <property type="molecule type" value="mRNA"/>
</dbReference>
<dbReference type="PIR" id="D86201">
    <property type="entry name" value="D86201"/>
</dbReference>
<dbReference type="RefSeq" id="NP_172147.2">
    <property type="nucleotide sequence ID" value="NM_100539.3"/>
</dbReference>
<dbReference type="SMR" id="Q84MB3"/>
<dbReference type="BioGRID" id="22412">
    <property type="interactions" value="1"/>
</dbReference>
<dbReference type="FunCoup" id="Q84MB3">
    <property type="interactions" value="8"/>
</dbReference>
<dbReference type="STRING" id="3702.Q84MB3"/>
<dbReference type="PaxDb" id="3702-AT1G06620.1"/>
<dbReference type="ProteomicsDB" id="244540"/>
<dbReference type="EnsemblPlants" id="AT1G06620.1">
    <property type="protein sequence ID" value="AT1G06620.1"/>
    <property type="gene ID" value="AT1G06620"/>
</dbReference>
<dbReference type="GeneID" id="837171"/>
<dbReference type="Gramene" id="AT1G06620.1">
    <property type="protein sequence ID" value="AT1G06620.1"/>
    <property type="gene ID" value="AT1G06620"/>
</dbReference>
<dbReference type="KEGG" id="ath:AT1G06620"/>
<dbReference type="Araport" id="AT1G06620"/>
<dbReference type="TAIR" id="AT1G06620"/>
<dbReference type="eggNOG" id="KOG0143">
    <property type="taxonomic scope" value="Eukaryota"/>
</dbReference>
<dbReference type="HOGENOM" id="CLU_010119_0_0_1"/>
<dbReference type="InParanoid" id="Q84MB3"/>
<dbReference type="OMA" id="EMGCMES"/>
<dbReference type="PhylomeDB" id="Q84MB3"/>
<dbReference type="BioCyc" id="ARA:AT1G06620-MONOMER"/>
<dbReference type="PRO" id="PR:Q84MB3"/>
<dbReference type="Proteomes" id="UP000006548">
    <property type="component" value="Chromosome 1"/>
</dbReference>
<dbReference type="ExpressionAtlas" id="Q84MB3">
    <property type="expression patterns" value="baseline and differential"/>
</dbReference>
<dbReference type="GO" id="GO:0051213">
    <property type="term" value="F:dioxygenase activity"/>
    <property type="evidence" value="ECO:0007669"/>
    <property type="project" value="UniProtKB-ARBA"/>
</dbReference>
<dbReference type="GO" id="GO:0046872">
    <property type="term" value="F:metal ion binding"/>
    <property type="evidence" value="ECO:0007669"/>
    <property type="project" value="UniProtKB-KW"/>
</dbReference>
<dbReference type="GO" id="GO:0009058">
    <property type="term" value="P:biosynthetic process"/>
    <property type="evidence" value="ECO:0007669"/>
    <property type="project" value="UniProtKB-ARBA"/>
</dbReference>
<dbReference type="FunFam" id="2.60.120.330:FF:000005">
    <property type="entry name" value="1-aminocyclopropane-1-carboxylate oxidase homolog 1"/>
    <property type="match status" value="1"/>
</dbReference>
<dbReference type="Gene3D" id="2.60.120.330">
    <property type="entry name" value="B-lactam Antibiotic, Isopenicillin N Synthase, Chain"/>
    <property type="match status" value="1"/>
</dbReference>
<dbReference type="InterPro" id="IPR026992">
    <property type="entry name" value="DIOX_N"/>
</dbReference>
<dbReference type="InterPro" id="IPR044861">
    <property type="entry name" value="IPNS-like_FE2OG_OXY"/>
</dbReference>
<dbReference type="InterPro" id="IPR027443">
    <property type="entry name" value="IPNS-like_sf"/>
</dbReference>
<dbReference type="InterPro" id="IPR005123">
    <property type="entry name" value="Oxoglu/Fe-dep_dioxygenase_dom"/>
</dbReference>
<dbReference type="PANTHER" id="PTHR10209:SF791">
    <property type="entry name" value="1-AMINOCYCLOPROPANE-1-CARBOXYLATE OXIDASE HOMOLOG 1"/>
    <property type="match status" value="1"/>
</dbReference>
<dbReference type="PANTHER" id="PTHR10209">
    <property type="entry name" value="OXIDOREDUCTASE, 2OG-FE II OXYGENASE FAMILY PROTEIN"/>
    <property type="match status" value="1"/>
</dbReference>
<dbReference type="Pfam" id="PF03171">
    <property type="entry name" value="2OG-FeII_Oxy"/>
    <property type="match status" value="1"/>
</dbReference>
<dbReference type="Pfam" id="PF14226">
    <property type="entry name" value="DIOX_N"/>
    <property type="match status" value="1"/>
</dbReference>
<dbReference type="SUPFAM" id="SSF51197">
    <property type="entry name" value="Clavaminate synthase-like"/>
    <property type="match status" value="1"/>
</dbReference>
<dbReference type="PROSITE" id="PS51471">
    <property type="entry name" value="FE2OG_OXY"/>
    <property type="match status" value="1"/>
</dbReference>
<organism>
    <name type="scientific">Arabidopsis thaliana</name>
    <name type="common">Mouse-ear cress</name>
    <dbReference type="NCBI Taxonomy" id="3702"/>
    <lineage>
        <taxon>Eukaryota</taxon>
        <taxon>Viridiplantae</taxon>
        <taxon>Streptophyta</taxon>
        <taxon>Embryophyta</taxon>
        <taxon>Tracheophyta</taxon>
        <taxon>Spermatophyta</taxon>
        <taxon>Magnoliopsida</taxon>
        <taxon>eudicotyledons</taxon>
        <taxon>Gunneridae</taxon>
        <taxon>Pentapetalae</taxon>
        <taxon>rosids</taxon>
        <taxon>malvids</taxon>
        <taxon>Brassicales</taxon>
        <taxon>Brassicaceae</taxon>
        <taxon>Camelineae</taxon>
        <taxon>Arabidopsis</taxon>
    </lineage>
</organism>
<reference key="1">
    <citation type="journal article" date="2000" name="Nature">
        <title>Sequence and analysis of chromosome 1 of the plant Arabidopsis thaliana.</title>
        <authorList>
            <person name="Theologis A."/>
            <person name="Ecker J.R."/>
            <person name="Palm C.J."/>
            <person name="Federspiel N.A."/>
            <person name="Kaul S."/>
            <person name="White O."/>
            <person name="Alonso J."/>
            <person name="Altafi H."/>
            <person name="Araujo R."/>
            <person name="Bowman C.L."/>
            <person name="Brooks S.Y."/>
            <person name="Buehler E."/>
            <person name="Chan A."/>
            <person name="Chao Q."/>
            <person name="Chen H."/>
            <person name="Cheuk R.F."/>
            <person name="Chin C.W."/>
            <person name="Chung M.K."/>
            <person name="Conn L."/>
            <person name="Conway A.B."/>
            <person name="Conway A.R."/>
            <person name="Creasy T.H."/>
            <person name="Dewar K."/>
            <person name="Dunn P."/>
            <person name="Etgu P."/>
            <person name="Feldblyum T.V."/>
            <person name="Feng J.-D."/>
            <person name="Fong B."/>
            <person name="Fujii C.Y."/>
            <person name="Gill J.E."/>
            <person name="Goldsmith A.D."/>
            <person name="Haas B."/>
            <person name="Hansen N.F."/>
            <person name="Hughes B."/>
            <person name="Huizar L."/>
            <person name="Hunter J.L."/>
            <person name="Jenkins J."/>
            <person name="Johnson-Hopson C."/>
            <person name="Khan S."/>
            <person name="Khaykin E."/>
            <person name="Kim C.J."/>
            <person name="Koo H.L."/>
            <person name="Kremenetskaia I."/>
            <person name="Kurtz D.B."/>
            <person name="Kwan A."/>
            <person name="Lam B."/>
            <person name="Langin-Hooper S."/>
            <person name="Lee A."/>
            <person name="Lee J.M."/>
            <person name="Lenz C.A."/>
            <person name="Li J.H."/>
            <person name="Li Y.-P."/>
            <person name="Lin X."/>
            <person name="Liu S.X."/>
            <person name="Liu Z.A."/>
            <person name="Luros J.S."/>
            <person name="Maiti R."/>
            <person name="Marziali A."/>
            <person name="Militscher J."/>
            <person name="Miranda M."/>
            <person name="Nguyen M."/>
            <person name="Nierman W.C."/>
            <person name="Osborne B.I."/>
            <person name="Pai G."/>
            <person name="Peterson J."/>
            <person name="Pham P.K."/>
            <person name="Rizzo M."/>
            <person name="Rooney T."/>
            <person name="Rowley D."/>
            <person name="Sakano H."/>
            <person name="Salzberg S.L."/>
            <person name="Schwartz J.R."/>
            <person name="Shinn P."/>
            <person name="Southwick A.M."/>
            <person name="Sun H."/>
            <person name="Tallon L.J."/>
            <person name="Tambunga G."/>
            <person name="Toriumi M.J."/>
            <person name="Town C.D."/>
            <person name="Utterback T."/>
            <person name="Van Aken S."/>
            <person name="Vaysberg M."/>
            <person name="Vysotskaia V.S."/>
            <person name="Walker M."/>
            <person name="Wu D."/>
            <person name="Yu G."/>
            <person name="Fraser C.M."/>
            <person name="Venter J.C."/>
            <person name="Davis R.W."/>
        </authorList>
    </citation>
    <scope>NUCLEOTIDE SEQUENCE [LARGE SCALE GENOMIC DNA]</scope>
    <source>
        <strain>cv. Columbia</strain>
    </source>
</reference>
<reference key="2">
    <citation type="journal article" date="2017" name="Plant J.">
        <title>Araport11: a complete reannotation of the Arabidopsis thaliana reference genome.</title>
        <authorList>
            <person name="Cheng C.Y."/>
            <person name="Krishnakumar V."/>
            <person name="Chan A.P."/>
            <person name="Thibaud-Nissen F."/>
            <person name="Schobel S."/>
            <person name="Town C.D."/>
        </authorList>
    </citation>
    <scope>GENOME REANNOTATION</scope>
    <source>
        <strain>cv. Columbia</strain>
    </source>
</reference>
<reference key="3">
    <citation type="journal article" date="2003" name="Science">
        <title>Empirical analysis of transcriptional activity in the Arabidopsis genome.</title>
        <authorList>
            <person name="Yamada K."/>
            <person name="Lim J."/>
            <person name="Dale J.M."/>
            <person name="Chen H."/>
            <person name="Shinn P."/>
            <person name="Palm C.J."/>
            <person name="Southwick A.M."/>
            <person name="Wu H.C."/>
            <person name="Kim C.J."/>
            <person name="Nguyen M."/>
            <person name="Pham P.K."/>
            <person name="Cheuk R.F."/>
            <person name="Karlin-Newmann G."/>
            <person name="Liu S.X."/>
            <person name="Lam B."/>
            <person name="Sakano H."/>
            <person name="Wu T."/>
            <person name="Yu G."/>
            <person name="Miranda M."/>
            <person name="Quach H.L."/>
            <person name="Tripp M."/>
            <person name="Chang C.H."/>
            <person name="Lee J.M."/>
            <person name="Toriumi M.J."/>
            <person name="Chan M.M."/>
            <person name="Tang C.C."/>
            <person name="Onodera C.S."/>
            <person name="Deng J.M."/>
            <person name="Akiyama K."/>
            <person name="Ansari Y."/>
            <person name="Arakawa T."/>
            <person name="Banh J."/>
            <person name="Banno F."/>
            <person name="Bowser L."/>
            <person name="Brooks S.Y."/>
            <person name="Carninci P."/>
            <person name="Chao Q."/>
            <person name="Choy N."/>
            <person name="Enju A."/>
            <person name="Goldsmith A.D."/>
            <person name="Gurjal M."/>
            <person name="Hansen N.F."/>
            <person name="Hayashizaki Y."/>
            <person name="Johnson-Hopson C."/>
            <person name="Hsuan V.W."/>
            <person name="Iida K."/>
            <person name="Karnes M."/>
            <person name="Khan S."/>
            <person name="Koesema E."/>
            <person name="Ishida J."/>
            <person name="Jiang P.X."/>
            <person name="Jones T."/>
            <person name="Kawai J."/>
            <person name="Kamiya A."/>
            <person name="Meyers C."/>
            <person name="Nakajima M."/>
            <person name="Narusaka M."/>
            <person name="Seki M."/>
            <person name="Sakurai T."/>
            <person name="Satou M."/>
            <person name="Tamse R."/>
            <person name="Vaysberg M."/>
            <person name="Wallender E.K."/>
            <person name="Wong C."/>
            <person name="Yamamura Y."/>
            <person name="Yuan S."/>
            <person name="Shinozaki K."/>
            <person name="Davis R.W."/>
            <person name="Theologis A."/>
            <person name="Ecker J.R."/>
        </authorList>
    </citation>
    <scope>NUCLEOTIDE SEQUENCE [LARGE SCALE MRNA]</scope>
    <source>
        <strain>cv. Columbia</strain>
    </source>
</reference>
<reference key="4">
    <citation type="submission" date="2006-07" db="EMBL/GenBank/DDBJ databases">
        <title>Large-scale analysis of RIKEN Arabidopsis full-length (RAFL) cDNAs.</title>
        <authorList>
            <person name="Totoki Y."/>
            <person name="Seki M."/>
            <person name="Ishida J."/>
            <person name="Nakajima M."/>
            <person name="Enju A."/>
            <person name="Kamiya A."/>
            <person name="Narusaka M."/>
            <person name="Shin-i T."/>
            <person name="Nakagawa M."/>
            <person name="Sakamoto N."/>
            <person name="Oishi K."/>
            <person name="Kohara Y."/>
            <person name="Kobayashi M."/>
            <person name="Toyoda A."/>
            <person name="Sakaki Y."/>
            <person name="Sakurai T."/>
            <person name="Iida K."/>
            <person name="Akiyama K."/>
            <person name="Satou M."/>
            <person name="Toyoda T."/>
            <person name="Konagaya A."/>
            <person name="Carninci P."/>
            <person name="Kawai J."/>
            <person name="Hayashizaki Y."/>
            <person name="Shinozaki K."/>
        </authorList>
    </citation>
    <scope>NUCLEOTIDE SEQUENCE [LARGE SCALE MRNA]</scope>
    <source>
        <strain>cv. Columbia</strain>
    </source>
</reference>
<evidence type="ECO:0000250" key="1"/>
<evidence type="ECO:0000255" key="2">
    <source>
        <dbReference type="PROSITE-ProRule" id="PRU00805"/>
    </source>
</evidence>
<evidence type="ECO:0000305" key="3"/>
<sequence length="365" mass="40351">MESSLPQVAALDRSTLLKAFDETKTGVKGLIDAGITEIPSIFRAPPATLTSPKPPSSSDFSIPTIDLKGGGTDSITRRSLVEKIGDAAEKWGFFQVINHGIPMDVLEKMIDGIREFHEQDTEVKKGFYSRDPASKMVYSSNFDLFSSPAANWRDTLGCYTAPDPPRPEDLPATCGEMMIEYSKEVMKLGKLLFELLSEALGLNTNHLKDMDCTNSLLLLGHYYPPCPQPDLTLGLTKHSDNSFLTILLQDHIGGLQVLHDQYWVDVPPVPGALVVNVGDLLQLITNDKFISVEHRVLANVAGPRISVACFFSSYLMANPRVYGPIKEILSEENPPNYRDTTITEYAKFYRSKGFDGTSGLLYLKI</sequence>
<proteinExistence type="evidence at transcript level"/>
<gene>
    <name type="ordered locus">At1g06620</name>
    <name type="ORF">F12K11.24</name>
    <name type="ORF">F12K11.6</name>
</gene>
<feature type="chain" id="PRO_0000274937" description="1-aminocyclopropane-1-carboxylate oxidase homolog 1">
    <location>
        <begin position="1"/>
        <end position="365"/>
    </location>
</feature>
<feature type="domain" description="Fe2OG dioxygenase" evidence="2">
    <location>
        <begin position="212"/>
        <end position="313"/>
    </location>
</feature>
<feature type="binding site" evidence="2">
    <location>
        <position position="238"/>
    </location>
    <ligand>
        <name>Fe cation</name>
        <dbReference type="ChEBI" id="CHEBI:24875"/>
    </ligand>
</feature>
<feature type="binding site" evidence="2">
    <location>
        <position position="240"/>
    </location>
    <ligand>
        <name>Fe cation</name>
        <dbReference type="ChEBI" id="CHEBI:24875"/>
    </ligand>
</feature>
<feature type="binding site" evidence="2">
    <location>
        <position position="294"/>
    </location>
    <ligand>
        <name>Fe cation</name>
        <dbReference type="ChEBI" id="CHEBI:24875"/>
    </ligand>
</feature>
<name>ACCH1_ARATH</name>